<evidence type="ECO:0000250" key="1"/>
<evidence type="ECO:0000255" key="2">
    <source>
        <dbReference type="HAMAP-Rule" id="MF_01109"/>
    </source>
</evidence>
<protein>
    <recommendedName>
        <fullName evidence="2">Ornithine carbamoyltransferase</fullName>
        <shortName evidence="2">OTCase</shortName>
        <ecNumber evidence="2">2.1.3.3</ecNumber>
    </recommendedName>
</protein>
<reference key="1">
    <citation type="journal article" date="2001" name="Nature">
        <title>Genome sequence of enterohaemorrhagic Escherichia coli O157:H7.</title>
        <authorList>
            <person name="Perna N.T."/>
            <person name="Plunkett G. III"/>
            <person name="Burland V."/>
            <person name="Mau B."/>
            <person name="Glasner J.D."/>
            <person name="Rose D.J."/>
            <person name="Mayhew G.F."/>
            <person name="Evans P.S."/>
            <person name="Gregor J."/>
            <person name="Kirkpatrick H.A."/>
            <person name="Posfai G."/>
            <person name="Hackett J."/>
            <person name="Klink S."/>
            <person name="Boutin A."/>
            <person name="Shao Y."/>
            <person name="Miller L."/>
            <person name="Grotbeck E.J."/>
            <person name="Davis N.W."/>
            <person name="Lim A."/>
            <person name="Dimalanta E.T."/>
            <person name="Potamousis K."/>
            <person name="Apodaca J."/>
            <person name="Anantharaman T.S."/>
            <person name="Lin J."/>
            <person name="Yen G."/>
            <person name="Schwartz D.C."/>
            <person name="Welch R.A."/>
            <person name="Blattner F.R."/>
        </authorList>
    </citation>
    <scope>NUCLEOTIDE SEQUENCE [LARGE SCALE GENOMIC DNA]</scope>
    <source>
        <strain>O157:H7 / EDL933 / ATCC 700927 / EHEC</strain>
    </source>
</reference>
<reference key="2">
    <citation type="journal article" date="2001" name="DNA Res.">
        <title>Complete genome sequence of enterohemorrhagic Escherichia coli O157:H7 and genomic comparison with a laboratory strain K-12.</title>
        <authorList>
            <person name="Hayashi T."/>
            <person name="Makino K."/>
            <person name="Ohnishi M."/>
            <person name="Kurokawa K."/>
            <person name="Ishii K."/>
            <person name="Yokoyama K."/>
            <person name="Han C.-G."/>
            <person name="Ohtsubo E."/>
            <person name="Nakayama K."/>
            <person name="Murata T."/>
            <person name="Tanaka M."/>
            <person name="Tobe T."/>
            <person name="Iida T."/>
            <person name="Takami H."/>
            <person name="Honda T."/>
            <person name="Sasakawa C."/>
            <person name="Ogasawara N."/>
            <person name="Yasunaga T."/>
            <person name="Kuhara S."/>
            <person name="Shiba T."/>
            <person name="Hattori M."/>
            <person name="Shinagawa H."/>
        </authorList>
    </citation>
    <scope>NUCLEOTIDE SEQUENCE [LARGE SCALE GENOMIC DNA]</scope>
    <source>
        <strain>O157:H7 / Sakai / RIMD 0509952 / EHEC</strain>
    </source>
</reference>
<gene>
    <name evidence="2" type="primary">argI</name>
    <name type="ordered locus">Z5866</name>
    <name type="ordered locus">ECs5231</name>
</gene>
<proteinExistence type="inferred from homology"/>
<organism>
    <name type="scientific">Escherichia coli O157:H7</name>
    <dbReference type="NCBI Taxonomy" id="83334"/>
    <lineage>
        <taxon>Bacteria</taxon>
        <taxon>Pseudomonadati</taxon>
        <taxon>Pseudomonadota</taxon>
        <taxon>Gammaproteobacteria</taxon>
        <taxon>Enterobacterales</taxon>
        <taxon>Enterobacteriaceae</taxon>
        <taxon>Escherichia</taxon>
    </lineage>
</organism>
<dbReference type="EC" id="2.1.3.3" evidence="2"/>
<dbReference type="EMBL" id="AE005174">
    <property type="protein sequence ID" value="AAG59453.1"/>
    <property type="molecule type" value="Genomic_DNA"/>
</dbReference>
<dbReference type="EMBL" id="BA000007">
    <property type="protein sequence ID" value="BAB38654.1"/>
    <property type="molecule type" value="Genomic_DNA"/>
</dbReference>
<dbReference type="PIR" id="A86124">
    <property type="entry name" value="A86124"/>
</dbReference>
<dbReference type="PIR" id="G91282">
    <property type="entry name" value="G91282"/>
</dbReference>
<dbReference type="RefSeq" id="NP_313258.1">
    <property type="nucleotide sequence ID" value="NC_002695.1"/>
</dbReference>
<dbReference type="SMR" id="Q8XCB8"/>
<dbReference type="STRING" id="155864.Z5866"/>
<dbReference type="GeneID" id="913389"/>
<dbReference type="KEGG" id="ece:Z5866"/>
<dbReference type="KEGG" id="ecs:ECs_5231"/>
<dbReference type="PATRIC" id="fig|386585.9.peg.5468"/>
<dbReference type="eggNOG" id="COG0078">
    <property type="taxonomic scope" value="Bacteria"/>
</dbReference>
<dbReference type="HOGENOM" id="CLU_043846_3_1_6"/>
<dbReference type="OMA" id="VATDVWV"/>
<dbReference type="UniPathway" id="UPA00068">
    <property type="reaction ID" value="UER00112"/>
</dbReference>
<dbReference type="Proteomes" id="UP000000558">
    <property type="component" value="Chromosome"/>
</dbReference>
<dbReference type="Proteomes" id="UP000002519">
    <property type="component" value="Chromosome"/>
</dbReference>
<dbReference type="GO" id="GO:0005737">
    <property type="term" value="C:cytoplasm"/>
    <property type="evidence" value="ECO:0007669"/>
    <property type="project" value="UniProtKB-SubCell"/>
</dbReference>
<dbReference type="GO" id="GO:0016597">
    <property type="term" value="F:amino acid binding"/>
    <property type="evidence" value="ECO:0007669"/>
    <property type="project" value="InterPro"/>
</dbReference>
<dbReference type="GO" id="GO:0004585">
    <property type="term" value="F:ornithine carbamoyltransferase activity"/>
    <property type="evidence" value="ECO:0007669"/>
    <property type="project" value="UniProtKB-UniRule"/>
</dbReference>
<dbReference type="GO" id="GO:0042450">
    <property type="term" value="P:arginine biosynthetic process via ornithine"/>
    <property type="evidence" value="ECO:0007669"/>
    <property type="project" value="TreeGrafter"/>
</dbReference>
<dbReference type="GO" id="GO:0019240">
    <property type="term" value="P:citrulline biosynthetic process"/>
    <property type="evidence" value="ECO:0007669"/>
    <property type="project" value="TreeGrafter"/>
</dbReference>
<dbReference type="GO" id="GO:0006526">
    <property type="term" value="P:L-arginine biosynthetic process"/>
    <property type="evidence" value="ECO:0007669"/>
    <property type="project" value="UniProtKB-UniRule"/>
</dbReference>
<dbReference type="FunFam" id="3.40.50.1370:FF:000003">
    <property type="entry name" value="Ornithine carbamoyltransferase"/>
    <property type="match status" value="1"/>
</dbReference>
<dbReference type="FunFam" id="3.40.50.1370:FF:000004">
    <property type="entry name" value="Ornithine carbamoyltransferase"/>
    <property type="match status" value="1"/>
</dbReference>
<dbReference type="Gene3D" id="3.40.50.1370">
    <property type="entry name" value="Aspartate/ornithine carbamoyltransferase"/>
    <property type="match status" value="2"/>
</dbReference>
<dbReference type="HAMAP" id="MF_01109">
    <property type="entry name" value="OTCase"/>
    <property type="match status" value="1"/>
</dbReference>
<dbReference type="InterPro" id="IPR006132">
    <property type="entry name" value="Asp/Orn_carbamoyltranf_P-bd"/>
</dbReference>
<dbReference type="InterPro" id="IPR006130">
    <property type="entry name" value="Asp/Orn_carbamoylTrfase"/>
</dbReference>
<dbReference type="InterPro" id="IPR036901">
    <property type="entry name" value="Asp/Orn_carbamoylTrfase_sf"/>
</dbReference>
<dbReference type="InterPro" id="IPR006131">
    <property type="entry name" value="Asp_carbamoyltransf_Asp/Orn-bd"/>
</dbReference>
<dbReference type="InterPro" id="IPR002292">
    <property type="entry name" value="Orn/put_carbamltrans"/>
</dbReference>
<dbReference type="InterPro" id="IPR024904">
    <property type="entry name" value="OTCase_ArgI"/>
</dbReference>
<dbReference type="NCBIfam" id="TIGR00658">
    <property type="entry name" value="orni_carb_tr"/>
    <property type="match status" value="1"/>
</dbReference>
<dbReference type="NCBIfam" id="NF003286">
    <property type="entry name" value="PRK04284.1"/>
    <property type="match status" value="1"/>
</dbReference>
<dbReference type="NCBIfam" id="NF009213">
    <property type="entry name" value="PRK12562.1"/>
    <property type="match status" value="1"/>
</dbReference>
<dbReference type="PANTHER" id="PTHR45753:SF4">
    <property type="entry name" value="ORNITHINE CARBAMOYLTRANSFERASE SUBUNIT F-RELATED"/>
    <property type="match status" value="1"/>
</dbReference>
<dbReference type="PANTHER" id="PTHR45753">
    <property type="entry name" value="ORNITHINE CARBAMOYLTRANSFERASE, MITOCHONDRIAL"/>
    <property type="match status" value="1"/>
</dbReference>
<dbReference type="Pfam" id="PF00185">
    <property type="entry name" value="OTCace"/>
    <property type="match status" value="1"/>
</dbReference>
<dbReference type="Pfam" id="PF02729">
    <property type="entry name" value="OTCace_N"/>
    <property type="match status" value="1"/>
</dbReference>
<dbReference type="PRINTS" id="PR00100">
    <property type="entry name" value="AOTCASE"/>
</dbReference>
<dbReference type="PRINTS" id="PR00102">
    <property type="entry name" value="OTCASE"/>
</dbReference>
<dbReference type="SUPFAM" id="SSF53671">
    <property type="entry name" value="Aspartate/ornithine carbamoyltransferase"/>
    <property type="match status" value="1"/>
</dbReference>
<dbReference type="PROSITE" id="PS00097">
    <property type="entry name" value="CARBAMOYLTRANSFERASE"/>
    <property type="match status" value="1"/>
</dbReference>
<feature type="initiator methionine" description="Removed" evidence="1">
    <location>
        <position position="1"/>
    </location>
</feature>
<feature type="chain" id="PRO_0000112922" description="Ornithine carbamoyltransferase">
    <location>
        <begin position="2"/>
        <end position="334"/>
    </location>
</feature>
<feature type="binding site" evidence="2">
    <location>
        <begin position="56"/>
        <end position="59"/>
    </location>
    <ligand>
        <name>carbamoyl phosphate</name>
        <dbReference type="ChEBI" id="CHEBI:58228"/>
    </ligand>
</feature>
<feature type="binding site" evidence="2">
    <location>
        <position position="83"/>
    </location>
    <ligand>
        <name>carbamoyl phosphate</name>
        <dbReference type="ChEBI" id="CHEBI:58228"/>
    </ligand>
</feature>
<feature type="binding site" evidence="2">
    <location>
        <position position="107"/>
    </location>
    <ligand>
        <name>carbamoyl phosphate</name>
        <dbReference type="ChEBI" id="CHEBI:58228"/>
    </ligand>
</feature>
<feature type="binding site" evidence="2">
    <location>
        <begin position="134"/>
        <end position="137"/>
    </location>
    <ligand>
        <name>carbamoyl phosphate</name>
        <dbReference type="ChEBI" id="CHEBI:58228"/>
    </ligand>
</feature>
<feature type="binding site" evidence="2">
    <location>
        <position position="168"/>
    </location>
    <ligand>
        <name>L-ornithine</name>
        <dbReference type="ChEBI" id="CHEBI:46911"/>
    </ligand>
</feature>
<feature type="binding site" evidence="2">
    <location>
        <position position="232"/>
    </location>
    <ligand>
        <name>L-ornithine</name>
        <dbReference type="ChEBI" id="CHEBI:46911"/>
    </ligand>
</feature>
<feature type="binding site" evidence="2">
    <location>
        <begin position="236"/>
        <end position="237"/>
    </location>
    <ligand>
        <name>L-ornithine</name>
        <dbReference type="ChEBI" id="CHEBI:46911"/>
    </ligand>
</feature>
<feature type="binding site" evidence="2">
    <location>
        <begin position="274"/>
        <end position="275"/>
    </location>
    <ligand>
        <name>carbamoyl phosphate</name>
        <dbReference type="ChEBI" id="CHEBI:58228"/>
    </ligand>
</feature>
<feature type="binding site" evidence="2">
    <location>
        <position position="320"/>
    </location>
    <ligand>
        <name>carbamoyl phosphate</name>
        <dbReference type="ChEBI" id="CHEBI:58228"/>
    </ligand>
</feature>
<sequence length="334" mass="36889">MSGFYHKHFLKLLDFTPAELNSLLQLAAKLKADKKSGKEEAKLTGKNIALIFEKDSTRTRCSFEVAAYDQGARVTYLGPSGSQIGHKESIKDTARVLGRMYDGIQYRGYGQEIVETLAEYAGVPVWNGLTNEFHPTQLLADLLTMQEHLPGKPFNEMTLVYAGDARNNMGNSMLEAAALTGLDLRLVAPQACWPEAALVTECRALAQQNGGNITLTEDVAKGVEGADFIYTDVWVSMGEAKEKWAERIALLRDYQVNSKMMQLTGNPEVKFLHCLPAFHDDQTTLGKKMAEEFGLHGGMEVTDEVFESAASIVFDQAENRMHTIKAVMVATLSK</sequence>
<accession>Q8XCB8</accession>
<name>OTC_ECO57</name>
<keyword id="KW-0028">Amino-acid biosynthesis</keyword>
<keyword id="KW-0055">Arginine biosynthesis</keyword>
<keyword id="KW-0963">Cytoplasm</keyword>
<keyword id="KW-1185">Reference proteome</keyword>
<keyword id="KW-0808">Transferase</keyword>
<comment type="function">
    <text evidence="1">Reversibly catalyzes the transfer of the carbamoyl group from carbamoyl phosphate (CP) to the N(epsilon) atom of ornithine (ORN) to produce L-citrulline.</text>
</comment>
<comment type="catalytic activity">
    <reaction evidence="2">
        <text>carbamoyl phosphate + L-ornithine = L-citrulline + phosphate + H(+)</text>
        <dbReference type="Rhea" id="RHEA:19513"/>
        <dbReference type="ChEBI" id="CHEBI:15378"/>
        <dbReference type="ChEBI" id="CHEBI:43474"/>
        <dbReference type="ChEBI" id="CHEBI:46911"/>
        <dbReference type="ChEBI" id="CHEBI:57743"/>
        <dbReference type="ChEBI" id="CHEBI:58228"/>
        <dbReference type="EC" id="2.1.3.3"/>
    </reaction>
</comment>
<comment type="pathway">
    <text evidence="2">Amino-acid biosynthesis; L-arginine biosynthesis; L-arginine from L-ornithine and carbamoyl phosphate: step 1/3.</text>
</comment>
<comment type="subcellular location">
    <subcellularLocation>
        <location evidence="2">Cytoplasm</location>
    </subcellularLocation>
</comment>
<comment type="similarity">
    <text evidence="2">Belongs to the aspartate/ornithine carbamoyltransferase superfamily. OTCase family.</text>
</comment>